<dbReference type="EMBL" id="M20035">
    <property type="protein sequence ID" value="AAA42241.1"/>
    <property type="molecule type" value="mRNA"/>
</dbReference>
<dbReference type="EMBL" id="M86564">
    <property type="protein sequence ID" value="AAA40758.1"/>
    <property type="molecule type" value="mRNA"/>
</dbReference>
<dbReference type="EMBL" id="M33024">
    <property type="protein sequence ID" value="AAA41931.1"/>
    <property type="molecule type" value="mRNA"/>
</dbReference>
<dbReference type="EMBL" id="X55326">
    <property type="protein sequence ID" value="CAA39028.1"/>
    <property type="molecule type" value="mRNA"/>
</dbReference>
<dbReference type="EMBL" id="BC061972">
    <property type="protein sequence ID" value="AAH61972.1"/>
    <property type="molecule type" value="mRNA"/>
</dbReference>
<dbReference type="EMBL" id="BC092569">
    <property type="protein sequence ID" value="AAH92569.1"/>
    <property type="molecule type" value="mRNA"/>
</dbReference>
<dbReference type="PIR" id="A32265">
    <property type="entry name" value="TNRTA"/>
</dbReference>
<dbReference type="RefSeq" id="NP_068508.1">
    <property type="nucleotide sequence ID" value="NM_021740.2"/>
</dbReference>
<dbReference type="RefSeq" id="XP_003751326.1">
    <property type="nucleotide sequence ID" value="XM_003751278.4"/>
</dbReference>
<dbReference type="RefSeq" id="XP_003752724.1">
    <property type="nucleotide sequence ID" value="XM_003752676.4"/>
</dbReference>
<dbReference type="BMRB" id="P06302"/>
<dbReference type="SMR" id="P06302"/>
<dbReference type="BioGRID" id="1198718">
    <property type="interactions" value="1"/>
</dbReference>
<dbReference type="BioGRID" id="247900">
    <property type="interactions" value="1"/>
</dbReference>
<dbReference type="FunCoup" id="P06302">
    <property type="interactions" value="5"/>
</dbReference>
<dbReference type="IntAct" id="P06302">
    <property type="interactions" value="1"/>
</dbReference>
<dbReference type="STRING" id="10116.ENSRNOP00000025093"/>
<dbReference type="iPTMnet" id="P06302"/>
<dbReference type="PhosphoSitePlus" id="P06302"/>
<dbReference type="jPOST" id="P06302"/>
<dbReference type="PaxDb" id="10116-ENSRNOP00000025093"/>
<dbReference type="GeneID" id="29222"/>
<dbReference type="KEGG" id="rno:29222"/>
<dbReference type="UCSC" id="RGD:61829">
    <property type="organism name" value="rat"/>
</dbReference>
<dbReference type="AGR" id="RGD:61829"/>
<dbReference type="CTD" id="5757"/>
<dbReference type="RGD" id="61829">
    <property type="gene designation" value="Ptma"/>
</dbReference>
<dbReference type="VEuPathDB" id="HostDB:ENSRNOG00000018584"/>
<dbReference type="VEuPathDB" id="HostDB:ENSRNOG00000025731"/>
<dbReference type="eggNOG" id="ENOG502S55T">
    <property type="taxonomic scope" value="Eukaryota"/>
</dbReference>
<dbReference type="HOGENOM" id="CLU_136539_0_1_1"/>
<dbReference type="InParanoid" id="P06302"/>
<dbReference type="TreeFam" id="TF350357"/>
<dbReference type="PRO" id="PR:P06302"/>
<dbReference type="Proteomes" id="UP000002494">
    <property type="component" value="Chromosome 13"/>
</dbReference>
<dbReference type="Proteomes" id="UP000002494">
    <property type="component" value="Chromosome 9"/>
</dbReference>
<dbReference type="Bgee" id="ENSRNOG00000018584">
    <property type="expression patterns" value="Expressed in thymus and 19 other cell types or tissues"/>
</dbReference>
<dbReference type="GO" id="GO:0005634">
    <property type="term" value="C:nucleus"/>
    <property type="evidence" value="ECO:0000266"/>
    <property type="project" value="RGD"/>
</dbReference>
<dbReference type="GO" id="GO:0140297">
    <property type="term" value="F:DNA-binding transcription factor binding"/>
    <property type="evidence" value="ECO:0000266"/>
    <property type="project" value="RGD"/>
</dbReference>
<dbReference type="GO" id="GO:0042393">
    <property type="term" value="F:histone binding"/>
    <property type="evidence" value="ECO:0000266"/>
    <property type="project" value="RGD"/>
</dbReference>
<dbReference type="GO" id="GO:0140713">
    <property type="term" value="F:histone chaperone activity"/>
    <property type="evidence" value="ECO:0000266"/>
    <property type="project" value="RGD"/>
</dbReference>
<dbReference type="GO" id="GO:0030154">
    <property type="term" value="P:cell differentiation"/>
    <property type="evidence" value="ECO:0000304"/>
    <property type="project" value="RGD"/>
</dbReference>
<dbReference type="GO" id="GO:0006325">
    <property type="term" value="P:chromatin organization"/>
    <property type="evidence" value="ECO:0000266"/>
    <property type="project" value="RGD"/>
</dbReference>
<dbReference type="GO" id="GO:0043066">
    <property type="term" value="P:negative regulation of apoptotic process"/>
    <property type="evidence" value="ECO:0000266"/>
    <property type="project" value="RGD"/>
</dbReference>
<dbReference type="GO" id="GO:0051092">
    <property type="term" value="P:positive regulation of NF-kappaB transcription factor activity"/>
    <property type="evidence" value="ECO:0000316"/>
    <property type="project" value="CAFA"/>
</dbReference>
<dbReference type="GO" id="GO:0045944">
    <property type="term" value="P:positive regulation of transcription by RNA polymerase II"/>
    <property type="evidence" value="ECO:0000314"/>
    <property type="project" value="RGD"/>
</dbReference>
<dbReference type="InterPro" id="IPR004931">
    <property type="entry name" value="Pro/parathymosin"/>
</dbReference>
<dbReference type="PANTHER" id="PTHR22745">
    <property type="entry name" value="PROTHYMOSIN ALPHA"/>
    <property type="match status" value="1"/>
</dbReference>
<dbReference type="PANTHER" id="PTHR22745:SF0">
    <property type="entry name" value="PROTHYMOSIN ALPHA"/>
    <property type="match status" value="1"/>
</dbReference>
<dbReference type="Pfam" id="PF03247">
    <property type="entry name" value="Prothymosin"/>
    <property type="match status" value="1"/>
</dbReference>
<reference key="1">
    <citation type="journal article" date="1985" name="Proc. Natl. Acad. Sci. U.S.A.">
        <title>Primary structure of rat thymus prothymosin alpha.</title>
        <authorList>
            <person name="Haritos A.A."/>
            <person name="Blacher R."/>
            <person name="Stein S."/>
            <person name="Caldarella J."/>
            <person name="Horecker B.L."/>
        </authorList>
    </citation>
    <scope>PRELIMINARY PROTEIN SEQUENCE OF 2-112</scope>
    <scope>CLEAVAGE OF INITIATOR METHIONINE</scope>
    <scope>ACETYLATION AT SER-2</scope>
</reference>
<reference key="2">
    <citation type="journal article" date="1988" name="Arch. Biochem. Biophys.">
        <title>Prothymosin alpha and parathymosin: amino acid sequences deduced from the cloned rat spleen cDNAs.</title>
        <authorList>
            <person name="Frangou-Lazaridis M."/>
            <person name="Clinton M."/>
            <person name="Goodall G.J."/>
            <person name="Horecker B.L."/>
        </authorList>
    </citation>
    <scope>NUCLEOTIDE SEQUENCE [MRNA]</scope>
    <source>
        <tissue>Spleen</tissue>
    </source>
</reference>
<reference key="3">
    <citation type="journal article" date="1991" name="EMBO J.">
        <title>The MYC protein activates transcription of the alpha-prothymosin gene.</title>
        <authorList>
            <person name="Eilers M."/>
            <person name="Schirm S."/>
            <person name="Bishop J.M."/>
        </authorList>
    </citation>
    <scope>NUCLEOTIDE SEQUENCE [MRNA]</scope>
</reference>
<reference key="4">
    <citation type="journal article" date="2004" name="Genome Res.">
        <title>The status, quality, and expansion of the NIH full-length cDNA project: the Mammalian Gene Collection (MGC).</title>
        <authorList>
            <consortium name="The MGC Project Team"/>
        </authorList>
    </citation>
    <scope>NUCLEOTIDE SEQUENCE [LARGE SCALE MRNA]</scope>
    <source>
        <tissue>Ovary</tissue>
        <tissue>Prostate</tissue>
    </source>
</reference>
<reference key="5">
    <citation type="journal article" date="1990" name="FEBS Lett.">
        <title>Identification of a low-Mr acidic nuclear protein as prothymosin alpha.</title>
        <authorList>
            <person name="Palvimo J."/>
            <person name="Linnala-Kankkunen A."/>
        </authorList>
    </citation>
    <scope>PARTIAL PROTEIN SEQUENCE</scope>
</reference>
<reference key="6">
    <citation type="journal article" date="2012" name="Nat. Commun.">
        <title>Quantitative maps of protein phosphorylation sites across 14 different rat organs and tissues.</title>
        <authorList>
            <person name="Lundby A."/>
            <person name="Secher A."/>
            <person name="Lage K."/>
            <person name="Nordsborg N.B."/>
            <person name="Dmytriyev A."/>
            <person name="Lundby C."/>
            <person name="Olsen J.V."/>
        </authorList>
    </citation>
    <scope>PHOSPHORYLATION [LARGE SCALE ANALYSIS] AT SER-2</scope>
    <scope>IDENTIFICATION BY MASS SPECTROMETRY [LARGE SCALE ANALYSIS]</scope>
</reference>
<evidence type="ECO:0000250" key="1"/>
<evidence type="ECO:0000250" key="2">
    <source>
        <dbReference type="UniProtKB" id="P01252"/>
    </source>
</evidence>
<evidence type="ECO:0000250" key="3">
    <source>
        <dbReference type="UniProtKB" id="P06454"/>
    </source>
</evidence>
<evidence type="ECO:0000250" key="4">
    <source>
        <dbReference type="UniProtKB" id="P26350"/>
    </source>
</evidence>
<evidence type="ECO:0000256" key="5">
    <source>
        <dbReference type="SAM" id="MobiDB-lite"/>
    </source>
</evidence>
<evidence type="ECO:0000269" key="6">
    <source>
    </source>
</evidence>
<evidence type="ECO:0000305" key="7"/>
<evidence type="ECO:0007744" key="8">
    <source>
    </source>
</evidence>
<proteinExistence type="evidence at protein level"/>
<accession>P06302</accession>
<accession>Q569C8</accession>
<name>PTMA_RAT</name>
<protein>
    <recommendedName>
        <fullName>Prothymosin alpha</fullName>
    </recommendedName>
    <component>
        <recommendedName>
            <fullName>Prothymosin alpha, N-terminally processed</fullName>
        </recommendedName>
    </component>
    <component>
        <recommendedName>
            <fullName>Thymosin alpha</fullName>
        </recommendedName>
    </component>
</protein>
<organism>
    <name type="scientific">Rattus norvegicus</name>
    <name type="common">Rat</name>
    <dbReference type="NCBI Taxonomy" id="10116"/>
    <lineage>
        <taxon>Eukaryota</taxon>
        <taxon>Metazoa</taxon>
        <taxon>Chordata</taxon>
        <taxon>Craniata</taxon>
        <taxon>Vertebrata</taxon>
        <taxon>Euteleostomi</taxon>
        <taxon>Mammalia</taxon>
        <taxon>Eutheria</taxon>
        <taxon>Euarchontoglires</taxon>
        <taxon>Glires</taxon>
        <taxon>Rodentia</taxon>
        <taxon>Myomorpha</taxon>
        <taxon>Muroidea</taxon>
        <taxon>Muridae</taxon>
        <taxon>Murinae</taxon>
        <taxon>Rattus</taxon>
    </lineage>
</organism>
<keyword id="KW-0007">Acetylation</keyword>
<keyword id="KW-0903">Direct protein sequencing</keyword>
<keyword id="KW-1017">Isopeptide bond</keyword>
<keyword id="KW-0539">Nucleus</keyword>
<keyword id="KW-0597">Phosphoprotein</keyword>
<keyword id="KW-1185">Reference proteome</keyword>
<keyword id="KW-0832">Ubl conjugation</keyword>
<sequence length="112" mass="12382">MSDAAVDTSSEITTKDLKEKKEVVEEAENGRDAPANGNAQNEENGEQEADNEVDEEEEEGGEEEEEEEEGDGEEEDGDEDEEAEAPTGKRVAEDDEDDDVETKKQKKTDEDD</sequence>
<feature type="chain" id="PRO_0000423258" description="Prothymosin alpha">
    <location>
        <begin position="1"/>
        <end position="112"/>
    </location>
</feature>
<feature type="initiator methionine" description="Removed; alternate" evidence="6">
    <location>
        <position position="1"/>
    </location>
</feature>
<feature type="chain" id="PRO_0000299253" description="Prothymosin alpha, N-terminally processed">
    <location>
        <begin position="2"/>
        <end position="112"/>
    </location>
</feature>
<feature type="peptide" id="PRO_0000029867" description="Thymosin alpha">
    <location>
        <begin position="2"/>
        <end position="29"/>
    </location>
</feature>
<feature type="region of interest" description="Disordered" evidence="5">
    <location>
        <begin position="1"/>
        <end position="112"/>
    </location>
</feature>
<feature type="compositionally biased region" description="Basic and acidic residues" evidence="5">
    <location>
        <begin position="13"/>
        <end position="31"/>
    </location>
</feature>
<feature type="compositionally biased region" description="Acidic residues" evidence="5">
    <location>
        <begin position="43"/>
        <end position="84"/>
    </location>
</feature>
<feature type="compositionally biased region" description="Basic and acidic residues" evidence="5">
    <location>
        <begin position="101"/>
        <end position="112"/>
    </location>
</feature>
<feature type="modified residue" description="N-acetylmethionine" evidence="3">
    <location>
        <position position="1"/>
    </location>
</feature>
<feature type="modified residue" description="N-acetylserine; in Prothymosin alpha, N-terminally processed" evidence="6">
    <location>
        <position position="2"/>
    </location>
</feature>
<feature type="modified residue" description="Phosphoserine" evidence="8">
    <location>
        <position position="2"/>
    </location>
</feature>
<feature type="modified residue" description="Phosphothreonine" evidence="2">
    <location>
        <position position="8"/>
    </location>
</feature>
<feature type="modified residue" description="Phosphoserine" evidence="3">
    <location>
        <position position="9"/>
    </location>
</feature>
<feature type="modified residue" description="Phosphoserine" evidence="3">
    <location>
        <position position="10"/>
    </location>
</feature>
<feature type="modified residue" description="Phosphothreonine" evidence="2">
    <location>
        <position position="13"/>
    </location>
</feature>
<feature type="modified residue" description="Phosphothreonine" evidence="2">
    <location>
        <position position="14"/>
    </location>
</feature>
<feature type="modified residue" description="N6-acetyllysine; alternate" evidence="3">
    <location>
        <position position="15"/>
    </location>
</feature>
<feature type="modified residue" description="N6-succinyllysine; alternate" evidence="4">
    <location>
        <position position="15"/>
    </location>
</feature>
<feature type="modified residue" description="Phosphothreonine" evidence="3">
    <location>
        <position position="102"/>
    </location>
</feature>
<feature type="modified residue" description="N6-acetyllysine; alternate" evidence="4">
    <location>
        <position position="103"/>
    </location>
</feature>
<feature type="modified residue" description="Phosphothreonine" evidence="3">
    <location>
        <position position="108"/>
    </location>
</feature>
<feature type="cross-link" description="Glycyl lysine isopeptide (Lys-Gly) (interchain with G-Cter in SUMO2); alternate" evidence="3">
    <location>
        <position position="103"/>
    </location>
</feature>
<comment type="function">
    <text>Prothymosin alpha may mediate immune function by conferring resistance to certain opportunistic infections.</text>
</comment>
<comment type="subunit">
    <text evidence="3">Interacts with NUPR1; regulates apoptotic process.</text>
</comment>
<comment type="subcellular location">
    <subcellularLocation>
        <location>Nucleus</location>
    </subcellularLocation>
</comment>
<comment type="PTM">
    <text evidence="1">Covalently linked to a small RNA of about 20 nucleotides.</text>
</comment>
<comment type="similarity">
    <text evidence="7">Belongs to the pro/parathymosin family.</text>
</comment>
<gene>
    <name type="primary">Ptma</name>
</gene>